<name>YAK1_ARATH</name>
<feature type="chain" id="PRO_0000442107" description="Dual specificity protein kinase YAK1 homolog">
    <location>
        <begin position="1"/>
        <end position="956"/>
    </location>
</feature>
<feature type="domain" description="Protein kinase" evidence="1">
    <location>
        <begin position="122"/>
        <end position="464"/>
    </location>
</feature>
<feature type="region of interest" description="Disordered" evidence="2">
    <location>
        <begin position="620"/>
        <end position="657"/>
    </location>
</feature>
<feature type="region of interest" description="Disordered" evidence="2">
    <location>
        <begin position="672"/>
        <end position="781"/>
    </location>
</feature>
<feature type="region of interest" description="Disordered" evidence="2">
    <location>
        <begin position="806"/>
        <end position="956"/>
    </location>
</feature>
<feature type="compositionally biased region" description="Polar residues" evidence="2">
    <location>
        <begin position="622"/>
        <end position="636"/>
    </location>
</feature>
<feature type="compositionally biased region" description="Low complexity" evidence="2">
    <location>
        <begin position="672"/>
        <end position="691"/>
    </location>
</feature>
<feature type="compositionally biased region" description="Polar residues" evidence="2">
    <location>
        <begin position="697"/>
        <end position="713"/>
    </location>
</feature>
<feature type="compositionally biased region" description="Polar residues" evidence="2">
    <location>
        <begin position="725"/>
        <end position="757"/>
    </location>
</feature>
<feature type="compositionally biased region" description="Polar residues" evidence="2">
    <location>
        <begin position="806"/>
        <end position="817"/>
    </location>
</feature>
<feature type="compositionally biased region" description="Low complexity" evidence="2">
    <location>
        <begin position="818"/>
        <end position="830"/>
    </location>
</feature>
<feature type="compositionally biased region" description="Polar residues" evidence="2">
    <location>
        <begin position="838"/>
        <end position="849"/>
    </location>
</feature>
<feature type="compositionally biased region" description="Polar residues" evidence="2">
    <location>
        <begin position="870"/>
        <end position="884"/>
    </location>
</feature>
<feature type="compositionally biased region" description="Polar residues" evidence="2">
    <location>
        <begin position="902"/>
        <end position="912"/>
    </location>
</feature>
<feature type="compositionally biased region" description="Low complexity" evidence="2">
    <location>
        <begin position="913"/>
        <end position="924"/>
    </location>
</feature>
<feature type="compositionally biased region" description="Polar residues" evidence="2">
    <location>
        <begin position="937"/>
        <end position="947"/>
    </location>
</feature>
<feature type="active site" description="Proton acceptor" evidence="1">
    <location>
        <position position="249"/>
    </location>
</feature>
<feature type="binding site" evidence="1">
    <location>
        <begin position="128"/>
        <end position="136"/>
    </location>
    <ligand>
        <name>ATP</name>
        <dbReference type="ChEBI" id="CHEBI:30616"/>
    </ligand>
</feature>
<feature type="binding site" evidence="1">
    <location>
        <position position="151"/>
    </location>
    <ligand>
        <name>ATP</name>
        <dbReference type="ChEBI" id="CHEBI:30616"/>
    </ligand>
</feature>
<feature type="modified residue" description="Phosphoserine" evidence="3">
    <location>
        <position position="222"/>
    </location>
</feature>
<evidence type="ECO:0000255" key="1">
    <source>
        <dbReference type="PROSITE-ProRule" id="PRU00159"/>
    </source>
</evidence>
<evidence type="ECO:0000256" key="2">
    <source>
        <dbReference type="SAM" id="MobiDB-lite"/>
    </source>
</evidence>
<evidence type="ECO:0000269" key="3">
    <source>
    </source>
</evidence>
<evidence type="ECO:0000269" key="4">
    <source>
    </source>
</evidence>
<evidence type="ECO:0000303" key="5">
    <source>
    </source>
</evidence>
<evidence type="ECO:0000305" key="6"/>
<evidence type="ECO:0000312" key="7">
    <source>
        <dbReference type="Araport" id="AT5G35980"/>
    </source>
</evidence>
<evidence type="ECO:0000312" key="8">
    <source>
        <dbReference type="EMBL" id="BAB09254.1"/>
    </source>
</evidence>
<dbReference type="EC" id="2.7.12.1" evidence="3"/>
<dbReference type="EMBL" id="AB026643">
    <property type="protein sequence ID" value="BAB09254.1"/>
    <property type="status" value="ALT_SEQ"/>
    <property type="molecule type" value="Genomic_DNA"/>
</dbReference>
<dbReference type="EMBL" id="CP002688">
    <property type="protein sequence ID" value="AED94035.1"/>
    <property type="molecule type" value="Genomic_DNA"/>
</dbReference>
<dbReference type="EMBL" id="CP002688">
    <property type="protein sequence ID" value="AED94036.1"/>
    <property type="status" value="ALT_SEQ"/>
    <property type="molecule type" value="Genomic_DNA"/>
</dbReference>
<dbReference type="EMBL" id="AY093090">
    <property type="protein sequence ID" value="AAM13089.1"/>
    <property type="molecule type" value="mRNA"/>
</dbReference>
<dbReference type="EMBL" id="BT010549">
    <property type="protein sequence ID" value="AAQ65172.1"/>
    <property type="molecule type" value="mRNA"/>
</dbReference>
<dbReference type="EMBL" id="AK221229">
    <property type="protein sequence ID" value="BAD93822.1"/>
    <property type="status" value="ALT_FRAME"/>
    <property type="molecule type" value="mRNA"/>
</dbReference>
<dbReference type="EMBL" id="AK221235">
    <property type="protein sequence ID" value="BAD93839.1"/>
    <property type="status" value="ALT_FRAME"/>
    <property type="molecule type" value="mRNA"/>
</dbReference>
<dbReference type="EMBL" id="AK230350">
    <property type="protein sequence ID" value="BAF02149.1"/>
    <property type="molecule type" value="mRNA"/>
</dbReference>
<dbReference type="RefSeq" id="NP_001031970.1">
    <property type="nucleotide sequence ID" value="NM_001036893.2"/>
</dbReference>
<dbReference type="RefSeq" id="NP_198447.2">
    <property type="nucleotide sequence ID" value="NM_122989.4"/>
</dbReference>
<dbReference type="SMR" id="Q8RWH3"/>
<dbReference type="FunCoup" id="Q8RWH3">
    <property type="interactions" value="1996"/>
</dbReference>
<dbReference type="IntAct" id="Q8RWH3">
    <property type="interactions" value="5"/>
</dbReference>
<dbReference type="MINT" id="Q8RWH3"/>
<dbReference type="STRING" id="3702.Q8RWH3"/>
<dbReference type="iPTMnet" id="Q8RWH3"/>
<dbReference type="PaxDb" id="3702-AT5G35980.1"/>
<dbReference type="ProteomicsDB" id="228629"/>
<dbReference type="EnsemblPlants" id="AT5G35980.1">
    <property type="protein sequence ID" value="AT5G35980.1"/>
    <property type="gene ID" value="AT5G35980"/>
</dbReference>
<dbReference type="GeneID" id="833590"/>
<dbReference type="Gramene" id="AT5G35980.1">
    <property type="protein sequence ID" value="AT5G35980.1"/>
    <property type="gene ID" value="AT5G35980"/>
</dbReference>
<dbReference type="KEGG" id="ath:AT5G35980"/>
<dbReference type="Araport" id="AT5G35980"/>
<dbReference type="TAIR" id="AT5G35980">
    <property type="gene designation" value="YAK1"/>
</dbReference>
<dbReference type="eggNOG" id="KOG0667">
    <property type="taxonomic scope" value="Eukaryota"/>
</dbReference>
<dbReference type="InParanoid" id="Q8RWH3"/>
<dbReference type="OMA" id="YHRHLCI"/>
<dbReference type="PhylomeDB" id="Q8RWH3"/>
<dbReference type="BRENDA" id="2.7.12.1">
    <property type="organism ID" value="399"/>
</dbReference>
<dbReference type="PRO" id="PR:Q8RWH3"/>
<dbReference type="Proteomes" id="UP000006548">
    <property type="component" value="Chromosome 5"/>
</dbReference>
<dbReference type="ExpressionAtlas" id="Q8RWH3">
    <property type="expression patterns" value="baseline and differential"/>
</dbReference>
<dbReference type="GO" id="GO:0009506">
    <property type="term" value="C:plasmodesma"/>
    <property type="evidence" value="ECO:0007005"/>
    <property type="project" value="TAIR"/>
</dbReference>
<dbReference type="GO" id="GO:0005524">
    <property type="term" value="F:ATP binding"/>
    <property type="evidence" value="ECO:0007669"/>
    <property type="project" value="UniProtKB-KW"/>
</dbReference>
<dbReference type="GO" id="GO:0106310">
    <property type="term" value="F:protein serine kinase activity"/>
    <property type="evidence" value="ECO:0007669"/>
    <property type="project" value="RHEA"/>
</dbReference>
<dbReference type="GO" id="GO:0004674">
    <property type="term" value="F:protein serine/threonine kinase activity"/>
    <property type="evidence" value="ECO:0000314"/>
    <property type="project" value="TAIR"/>
</dbReference>
<dbReference type="GO" id="GO:0004712">
    <property type="term" value="F:protein serine/threonine/tyrosine kinase activity"/>
    <property type="evidence" value="ECO:0007669"/>
    <property type="project" value="UniProtKB-EC"/>
</dbReference>
<dbReference type="GO" id="GO:0004713">
    <property type="term" value="F:protein tyrosine kinase activity"/>
    <property type="evidence" value="ECO:0000314"/>
    <property type="project" value="TAIR"/>
</dbReference>
<dbReference type="GO" id="GO:0009789">
    <property type="term" value="P:positive regulation of abscisic acid-activated signaling pathway"/>
    <property type="evidence" value="ECO:0000315"/>
    <property type="project" value="UniProtKB"/>
</dbReference>
<dbReference type="GO" id="GO:0046777">
    <property type="term" value="P:protein autophosphorylation"/>
    <property type="evidence" value="ECO:0000314"/>
    <property type="project" value="TAIR"/>
</dbReference>
<dbReference type="GO" id="GO:0006468">
    <property type="term" value="P:protein phosphorylation"/>
    <property type="evidence" value="ECO:0000315"/>
    <property type="project" value="TAIR"/>
</dbReference>
<dbReference type="CDD" id="cd14212">
    <property type="entry name" value="PKc_YAK1"/>
    <property type="match status" value="1"/>
</dbReference>
<dbReference type="FunFam" id="3.30.200.20:FF:000087">
    <property type="entry name" value="Dual specificity tyrosine-phosphorylation-regulated kinase 1A"/>
    <property type="match status" value="1"/>
</dbReference>
<dbReference type="Gene3D" id="3.30.200.20">
    <property type="entry name" value="Phosphorylase Kinase, domain 1"/>
    <property type="match status" value="1"/>
</dbReference>
<dbReference type="Gene3D" id="1.10.510.10">
    <property type="entry name" value="Transferase(Phosphotransferase) domain 1"/>
    <property type="match status" value="1"/>
</dbReference>
<dbReference type="InterPro" id="IPR011009">
    <property type="entry name" value="Kinase-like_dom_sf"/>
</dbReference>
<dbReference type="InterPro" id="IPR000719">
    <property type="entry name" value="Prot_kinase_dom"/>
</dbReference>
<dbReference type="InterPro" id="IPR017441">
    <property type="entry name" value="Protein_kinase_ATP_BS"/>
</dbReference>
<dbReference type="InterPro" id="IPR008271">
    <property type="entry name" value="Ser/Thr_kinase_AS"/>
</dbReference>
<dbReference type="InterPro" id="IPR050494">
    <property type="entry name" value="Ser_Thr_dual-spec_kinase"/>
</dbReference>
<dbReference type="PANTHER" id="PTHR24058">
    <property type="entry name" value="DUAL SPECIFICITY PROTEIN KINASE"/>
    <property type="match status" value="1"/>
</dbReference>
<dbReference type="PANTHER" id="PTHR24058:SF17">
    <property type="entry name" value="HOMEODOMAIN INTERACTING PROTEIN KINASE, ISOFORM D"/>
    <property type="match status" value="1"/>
</dbReference>
<dbReference type="Pfam" id="PF00069">
    <property type="entry name" value="Pkinase"/>
    <property type="match status" value="1"/>
</dbReference>
<dbReference type="SMART" id="SM00220">
    <property type="entry name" value="S_TKc"/>
    <property type="match status" value="1"/>
</dbReference>
<dbReference type="SUPFAM" id="SSF56112">
    <property type="entry name" value="Protein kinase-like (PK-like)"/>
    <property type="match status" value="1"/>
</dbReference>
<dbReference type="PROSITE" id="PS00107">
    <property type="entry name" value="PROTEIN_KINASE_ATP"/>
    <property type="match status" value="1"/>
</dbReference>
<dbReference type="PROSITE" id="PS50011">
    <property type="entry name" value="PROTEIN_KINASE_DOM"/>
    <property type="match status" value="1"/>
</dbReference>
<dbReference type="PROSITE" id="PS00108">
    <property type="entry name" value="PROTEIN_KINASE_ST"/>
    <property type="match status" value="1"/>
</dbReference>
<organism>
    <name type="scientific">Arabidopsis thaliana</name>
    <name type="common">Mouse-ear cress</name>
    <dbReference type="NCBI Taxonomy" id="3702"/>
    <lineage>
        <taxon>Eukaryota</taxon>
        <taxon>Viridiplantae</taxon>
        <taxon>Streptophyta</taxon>
        <taxon>Embryophyta</taxon>
        <taxon>Tracheophyta</taxon>
        <taxon>Spermatophyta</taxon>
        <taxon>Magnoliopsida</taxon>
        <taxon>eudicotyledons</taxon>
        <taxon>Gunneridae</taxon>
        <taxon>Pentapetalae</taxon>
        <taxon>rosids</taxon>
        <taxon>malvids</taxon>
        <taxon>Brassicales</taxon>
        <taxon>Brassicaceae</taxon>
        <taxon>Camelineae</taxon>
        <taxon>Arabidopsis</taxon>
    </lineage>
</organism>
<sequence length="956" mass="105523">MDDIDSSDGAAAARAGEIGSIGVSTPWKPIQLVFKRYLPQNGSASKVHVAVKKPVVVRLTRDLVETYKICDPQFKYRGELNPKRYLTTPSVGVNNDGFDNVNYDLILAVNDDFCSSDSRQRYIVKDLLGHGTFGQVAKCWVPETNSFVAVKVIKNQLAYYQQALVEVSILTTLNKKYDPEDKNHIVRIYDYFLHQSHLCICFELLDMNLYELIKINQFRGLSLSIVKLFSKQILLGLALLKDAGIIHCDLKPENILLCASVKPTEIKIIDFGSACMEDKTVYSYIQSRYYRSPEVLLGYQYTTAIDMWSFGCIVAELFLGLPLFPGGSEFDILRRMIEILGKQPPDYVLKEAKNTNKFFKCVGSVHNLGNGGTYGGLKSAYMALTGEEFEAREKKKPEIGKEYFNHKNLEEIVKSYPYKINLPEDDVVKETQIRLALIDFLKGLMEFDPAKRWSPFQAAKHPFITGEPFTCPYNPPPETPRVHVTQNIKVDHHPGEGHWFAAGLSPHVSGRTRIPMHNSPHFQMMPYSHANSYGSIGSYGSYNDGTIQDNSYGSYGGTGNMFAYYSPVNHPGLYMQNQGGVSMLGTSPDARRRVMQYPHGNGPNGLGTSPSAGNFAPLPLGTSPSQFTPNTNNQFLAGSPGHHGPTSPVRNSCHGSPLGKMAAFSQINRRMSAGYSGGSQSQDSSLSQAQGHGMDNFYQNEGYSGQFSGSPSRRQLDSGVKNRKQTQGGTTLSTGYSTHNNANSSLRSNMYNPSSTAHHLENPDTALSVPDPGDWDPNYSDDLLLEEDSADESSLANAFSRGMQLGSTDASSYSRRFNSNASTSSSNPTTQRRYAPNQAFSQVETGSPPSNDPHARFGQHIPGSQYIPHVSQNSPSRLGQQPPQRYNHGRPNAGRTMDRNHMNAQLPPSNTNSGGQQRSPRSSSYTNGVPWGRRTNNHVPNVPSTSHGRVDYGSIA</sequence>
<comment type="function">
    <text evidence="3 4">Dual specificity protein kinase that phosphorylates ANN1, ANN2 and CP29B at serine and threonine residues, and ANN1, ANN2 and ANN4 at tyrosine residues. May regulate the phosphorylation status of annexin proteins (PubMed:26452715). Acts as a positive regulator in abscisic acid (ABA)-mediated regulation of postgermination growth and drought response. May regulate the expression of ABA-responsive genes such as RD22, RD29A, LTI65/RD29B and RAB18 (PubMed:27264339).</text>
</comment>
<comment type="catalytic activity">
    <reaction evidence="3">
        <text>L-seryl-[protein] + ATP = O-phospho-L-seryl-[protein] + ADP + H(+)</text>
        <dbReference type="Rhea" id="RHEA:17989"/>
        <dbReference type="Rhea" id="RHEA-COMP:9863"/>
        <dbReference type="Rhea" id="RHEA-COMP:11604"/>
        <dbReference type="ChEBI" id="CHEBI:15378"/>
        <dbReference type="ChEBI" id="CHEBI:29999"/>
        <dbReference type="ChEBI" id="CHEBI:30616"/>
        <dbReference type="ChEBI" id="CHEBI:83421"/>
        <dbReference type="ChEBI" id="CHEBI:456216"/>
        <dbReference type="EC" id="2.7.12.1"/>
    </reaction>
</comment>
<comment type="catalytic activity">
    <reaction evidence="3">
        <text>L-threonyl-[protein] + ATP = O-phospho-L-threonyl-[protein] + ADP + H(+)</text>
        <dbReference type="Rhea" id="RHEA:46608"/>
        <dbReference type="Rhea" id="RHEA-COMP:11060"/>
        <dbReference type="Rhea" id="RHEA-COMP:11605"/>
        <dbReference type="ChEBI" id="CHEBI:15378"/>
        <dbReference type="ChEBI" id="CHEBI:30013"/>
        <dbReference type="ChEBI" id="CHEBI:30616"/>
        <dbReference type="ChEBI" id="CHEBI:61977"/>
        <dbReference type="ChEBI" id="CHEBI:456216"/>
        <dbReference type="EC" id="2.7.12.1"/>
    </reaction>
</comment>
<comment type="catalytic activity">
    <reaction evidence="3">
        <text>L-tyrosyl-[protein] + ATP = O-phospho-L-tyrosyl-[protein] + ADP + H(+)</text>
        <dbReference type="Rhea" id="RHEA:10596"/>
        <dbReference type="Rhea" id="RHEA-COMP:10136"/>
        <dbReference type="Rhea" id="RHEA-COMP:20101"/>
        <dbReference type="ChEBI" id="CHEBI:15378"/>
        <dbReference type="ChEBI" id="CHEBI:30616"/>
        <dbReference type="ChEBI" id="CHEBI:46858"/>
        <dbReference type="ChEBI" id="CHEBI:61978"/>
        <dbReference type="ChEBI" id="CHEBI:456216"/>
        <dbReference type="EC" id="2.7.12.1"/>
    </reaction>
</comment>
<comment type="induction">
    <text evidence="4">Induced by drought stress.</text>
</comment>
<comment type="PTM">
    <text evidence="3">Autophosphorylated at Ser-222.</text>
</comment>
<comment type="disruption phenotype">
    <text evidence="4">No visible phenotype under normal growth conditions, but mutant seedlings exhibit decreased sensitivity to abscisic acid (ABA) inhibition of seed germination, cotyledon greening, seedling growth, and stomatal movement. Decreased tolerance to drought stress.</text>
</comment>
<comment type="similarity">
    <text evidence="1">Belongs to the protein kinase superfamily. Ser/Thr protein kinase family.</text>
</comment>
<comment type="sequence caution" evidence="6">
    <conflict type="erroneous gene model prediction">
        <sequence resource="EMBL-CDS" id="AED94036"/>
    </conflict>
</comment>
<comment type="sequence caution" evidence="6">
    <conflict type="erroneous gene model prediction">
        <sequence resource="EMBL-CDS" id="BAB09254"/>
    </conflict>
</comment>
<comment type="sequence caution" evidence="6">
    <conflict type="frameshift">
        <sequence resource="EMBL-CDS" id="BAD93822"/>
    </conflict>
</comment>
<comment type="sequence caution" evidence="6">
    <conflict type="frameshift">
        <sequence resource="EMBL-CDS" id="BAD93839"/>
    </conflict>
</comment>
<protein>
    <recommendedName>
        <fullName evidence="6">Dual specificity protein kinase YAK1 homolog</fullName>
        <shortName evidence="5">AtYAK1</shortName>
        <ecNumber evidence="3">2.7.12.1</ecNumber>
    </recommendedName>
    <alternativeName>
        <fullName evidence="6">Dual specificity tyrosine-phosphorylation-regulated kinase YAK1</fullName>
    </alternativeName>
</protein>
<gene>
    <name evidence="5" type="primary">YAK1</name>
    <name evidence="7" type="ordered locus">At5g35980</name>
    <name evidence="8" type="ORF">MEE13.9</name>
</gene>
<reference key="1">
    <citation type="submission" date="1999-04" db="EMBL/GenBank/DDBJ databases">
        <title>Structural analysis of Arabidopsis thaliana chromosome 5. XI.</title>
        <authorList>
            <person name="Kaneko T."/>
            <person name="Katoh T."/>
            <person name="Asamizu E."/>
            <person name="Sato S."/>
            <person name="Nakamura Y."/>
            <person name="Kotani H."/>
            <person name="Tabata S."/>
        </authorList>
    </citation>
    <scope>NUCLEOTIDE SEQUENCE [LARGE SCALE GENOMIC DNA]</scope>
    <source>
        <strain>cv. Columbia</strain>
    </source>
</reference>
<reference key="2">
    <citation type="journal article" date="2017" name="Plant J.">
        <title>Araport11: a complete reannotation of the Arabidopsis thaliana reference genome.</title>
        <authorList>
            <person name="Cheng C.Y."/>
            <person name="Krishnakumar V."/>
            <person name="Chan A.P."/>
            <person name="Thibaud-Nissen F."/>
            <person name="Schobel S."/>
            <person name="Town C.D."/>
        </authorList>
    </citation>
    <scope>GENOME REANNOTATION</scope>
    <source>
        <strain>cv. Columbia</strain>
    </source>
</reference>
<reference key="3">
    <citation type="journal article" date="2003" name="Science">
        <title>Empirical analysis of transcriptional activity in the Arabidopsis genome.</title>
        <authorList>
            <person name="Yamada K."/>
            <person name="Lim J."/>
            <person name="Dale J.M."/>
            <person name="Chen H."/>
            <person name="Shinn P."/>
            <person name="Palm C.J."/>
            <person name="Southwick A.M."/>
            <person name="Wu H.C."/>
            <person name="Kim C.J."/>
            <person name="Nguyen M."/>
            <person name="Pham P.K."/>
            <person name="Cheuk R.F."/>
            <person name="Karlin-Newmann G."/>
            <person name="Liu S.X."/>
            <person name="Lam B."/>
            <person name="Sakano H."/>
            <person name="Wu T."/>
            <person name="Yu G."/>
            <person name="Miranda M."/>
            <person name="Quach H.L."/>
            <person name="Tripp M."/>
            <person name="Chang C.H."/>
            <person name="Lee J.M."/>
            <person name="Toriumi M.J."/>
            <person name="Chan M.M."/>
            <person name="Tang C.C."/>
            <person name="Onodera C.S."/>
            <person name="Deng J.M."/>
            <person name="Akiyama K."/>
            <person name="Ansari Y."/>
            <person name="Arakawa T."/>
            <person name="Banh J."/>
            <person name="Banno F."/>
            <person name="Bowser L."/>
            <person name="Brooks S.Y."/>
            <person name="Carninci P."/>
            <person name="Chao Q."/>
            <person name="Choy N."/>
            <person name="Enju A."/>
            <person name="Goldsmith A.D."/>
            <person name="Gurjal M."/>
            <person name="Hansen N.F."/>
            <person name="Hayashizaki Y."/>
            <person name="Johnson-Hopson C."/>
            <person name="Hsuan V.W."/>
            <person name="Iida K."/>
            <person name="Karnes M."/>
            <person name="Khan S."/>
            <person name="Koesema E."/>
            <person name="Ishida J."/>
            <person name="Jiang P.X."/>
            <person name="Jones T."/>
            <person name="Kawai J."/>
            <person name="Kamiya A."/>
            <person name="Meyers C."/>
            <person name="Nakajima M."/>
            <person name="Narusaka M."/>
            <person name="Seki M."/>
            <person name="Sakurai T."/>
            <person name="Satou M."/>
            <person name="Tamse R."/>
            <person name="Vaysberg M."/>
            <person name="Wallender E.K."/>
            <person name="Wong C."/>
            <person name="Yamamura Y."/>
            <person name="Yuan S."/>
            <person name="Shinozaki K."/>
            <person name="Davis R.W."/>
            <person name="Theologis A."/>
            <person name="Ecker J.R."/>
        </authorList>
    </citation>
    <scope>NUCLEOTIDE SEQUENCE [LARGE SCALE MRNA]</scope>
    <source>
        <strain>cv. Columbia</strain>
    </source>
</reference>
<reference key="4">
    <citation type="submission" date="2006-07" db="EMBL/GenBank/DDBJ databases">
        <title>Large-scale analysis of RIKEN Arabidopsis full-length (RAFL) cDNAs.</title>
        <authorList>
            <person name="Totoki Y."/>
            <person name="Seki M."/>
            <person name="Ishida J."/>
            <person name="Nakajima M."/>
            <person name="Enju A."/>
            <person name="Kamiya A."/>
            <person name="Narusaka M."/>
            <person name="Shin-i T."/>
            <person name="Nakagawa M."/>
            <person name="Sakamoto N."/>
            <person name="Oishi K."/>
            <person name="Kohara Y."/>
            <person name="Kobayashi M."/>
            <person name="Toyoda A."/>
            <person name="Sakaki Y."/>
            <person name="Sakurai T."/>
            <person name="Iida K."/>
            <person name="Akiyama K."/>
            <person name="Satou M."/>
            <person name="Toyoda T."/>
            <person name="Konagaya A."/>
            <person name="Carninci P."/>
            <person name="Kawai J."/>
            <person name="Hayashizaki Y."/>
            <person name="Shinozaki K."/>
        </authorList>
    </citation>
    <scope>NUCLEOTIDE SEQUENCE [LARGE SCALE MRNA]</scope>
    <source>
        <strain>cv. Columbia</strain>
    </source>
</reference>
<reference key="5">
    <citation type="journal article" date="2008" name="J. Proteome Res.">
        <title>Site-specific phosphorylation profiling of Arabidopsis proteins by mass spectrometry and peptide chip analysis.</title>
        <authorList>
            <person name="de la Fuente van Bentem S."/>
            <person name="Anrather D."/>
            <person name="Dohnal I."/>
            <person name="Roitinger E."/>
            <person name="Csaszar E."/>
            <person name="Joore J."/>
            <person name="Buijnink J."/>
            <person name="Carreri A."/>
            <person name="Forzani C."/>
            <person name="Lorkovic Z.J."/>
            <person name="Barta A."/>
            <person name="Lecourieux D."/>
            <person name="Verhounig A."/>
            <person name="Jonak C."/>
            <person name="Hirt H."/>
        </authorList>
    </citation>
    <scope>IDENTIFICATION BY MASS SPECTROMETRY [LARGE SCALE ANALYSIS]</scope>
    <source>
        <tissue>Root</tissue>
    </source>
</reference>
<reference key="6">
    <citation type="journal article" date="2009" name="Plant Physiol.">
        <title>Large-scale Arabidopsis phosphoproteome profiling reveals novel chloroplast kinase substrates and phosphorylation networks.</title>
        <authorList>
            <person name="Reiland S."/>
            <person name="Messerli G."/>
            <person name="Baerenfaller K."/>
            <person name="Gerrits B."/>
            <person name="Endler A."/>
            <person name="Grossmann J."/>
            <person name="Gruissem W."/>
            <person name="Baginsky S."/>
        </authorList>
    </citation>
    <scope>IDENTIFICATION BY MASS SPECTROMETRY [LARGE SCALE ANALYSIS]</scope>
</reference>
<reference key="7">
    <citation type="journal article" date="2015" name="FEBS Lett.">
        <title>Arabidopsis Yak1 protein (AtYak1) is a dual specificity protein kinase.</title>
        <authorList>
            <person name="Kim D."/>
            <person name="Ntui V.O."/>
            <person name="Zhang N."/>
            <person name="Xiong L."/>
        </authorList>
    </citation>
    <scope>FUNCTION</scope>
    <scope>IDENTIFICATION BY MASS SPECTROMETRY</scope>
    <scope>CATALYTIC ACTIVITY</scope>
    <scope>PHOSPHORYLATION AT SER-222</scope>
</reference>
<reference key="8">
    <citation type="journal article" date="2016" name="FEBS Lett.">
        <title>Arabidopsis YAK1 regulates abscisic acid response and drought resistance.</title>
        <authorList>
            <person name="Kim D."/>
            <person name="Ntui V.O."/>
            <person name="Xiong L."/>
        </authorList>
    </citation>
    <scope>FUNCTION</scope>
    <scope>INDUCTION BY DROUGHT STRESS</scope>
    <scope>DISRUPTION PHENOTYPE</scope>
</reference>
<accession>Q8RWH3</accession>
<accession>Q56YT6</accession>
<accession>Q9FGC1</accession>
<keyword id="KW-0067">ATP-binding</keyword>
<keyword id="KW-0418">Kinase</keyword>
<keyword id="KW-0547">Nucleotide-binding</keyword>
<keyword id="KW-0597">Phosphoprotein</keyword>
<keyword id="KW-1185">Reference proteome</keyword>
<keyword id="KW-0723">Serine/threonine-protein kinase</keyword>
<keyword id="KW-0346">Stress response</keyword>
<keyword id="KW-0808">Transferase</keyword>
<keyword id="KW-0829">Tyrosine-protein kinase</keyword>
<proteinExistence type="evidence at protein level"/>